<organism>
    <name type="scientific">Bos taurus</name>
    <name type="common">Bovine</name>
    <dbReference type="NCBI Taxonomy" id="9913"/>
    <lineage>
        <taxon>Eukaryota</taxon>
        <taxon>Metazoa</taxon>
        <taxon>Chordata</taxon>
        <taxon>Craniata</taxon>
        <taxon>Vertebrata</taxon>
        <taxon>Euteleostomi</taxon>
        <taxon>Mammalia</taxon>
        <taxon>Eutheria</taxon>
        <taxon>Laurasiatheria</taxon>
        <taxon>Artiodactyla</taxon>
        <taxon>Ruminantia</taxon>
        <taxon>Pecora</taxon>
        <taxon>Bovidae</taxon>
        <taxon>Bovinae</taxon>
        <taxon>Bos</taxon>
    </lineage>
</organism>
<reference key="1">
    <citation type="submission" date="2006-05" db="EMBL/GenBank/DDBJ databases">
        <authorList>
            <consortium name="NIH - Mammalian Gene Collection (MGC) project"/>
        </authorList>
    </citation>
    <scope>NUCLEOTIDE SEQUENCE [LARGE SCALE MRNA]</scope>
    <source>
        <strain>Hereford</strain>
        <tissue>Ascending colon</tissue>
    </source>
</reference>
<accession>Q1LZ96</accession>
<keyword id="KW-0143">Chaperone</keyword>
<keyword id="KW-0472">Membrane</keyword>
<keyword id="KW-0496">Mitochondrion</keyword>
<keyword id="KW-0999">Mitochondrion inner membrane</keyword>
<keyword id="KW-1185">Reference proteome</keyword>
<keyword id="KW-0809">Transit peptide</keyword>
<dbReference type="EMBL" id="BC116131">
    <property type="protein sequence ID" value="AAI16132.1"/>
    <property type="molecule type" value="mRNA"/>
</dbReference>
<dbReference type="RefSeq" id="NP_001069091.1">
    <property type="nucleotide sequence ID" value="NM_001075623.1"/>
</dbReference>
<dbReference type="SMR" id="Q1LZ96"/>
<dbReference type="FunCoup" id="Q1LZ96">
    <property type="interactions" value="2726"/>
</dbReference>
<dbReference type="STRING" id="9913.ENSBTAP00000011594"/>
<dbReference type="PaxDb" id="9913-ENSBTAP00000011594"/>
<dbReference type="Ensembl" id="ENSBTAT00000011594.7">
    <property type="protein sequence ID" value="ENSBTAP00000011594.5"/>
    <property type="gene ID" value="ENSBTAG00000008801.7"/>
</dbReference>
<dbReference type="GeneID" id="513521"/>
<dbReference type="KEGG" id="bta:513521"/>
<dbReference type="CTD" id="91647"/>
<dbReference type="VEuPathDB" id="HostDB:ENSBTAG00000008801"/>
<dbReference type="VGNC" id="VGNC:26333">
    <property type="gene designation" value="ATPAF2"/>
</dbReference>
<dbReference type="eggNOG" id="KOG3015">
    <property type="taxonomic scope" value="Eukaryota"/>
</dbReference>
<dbReference type="GeneTree" id="ENSGT00390000009492"/>
<dbReference type="HOGENOM" id="CLU_047893_2_0_1"/>
<dbReference type="InParanoid" id="Q1LZ96"/>
<dbReference type="OMA" id="WDPVLHW"/>
<dbReference type="OrthoDB" id="5673at2759"/>
<dbReference type="TreeFam" id="TF315138"/>
<dbReference type="Proteomes" id="UP000009136">
    <property type="component" value="Chromosome 19"/>
</dbReference>
<dbReference type="Bgee" id="ENSBTAG00000008801">
    <property type="expression patterns" value="Expressed in semen and 106 other cell types or tissues"/>
</dbReference>
<dbReference type="GO" id="GO:0005829">
    <property type="term" value="C:cytosol"/>
    <property type="evidence" value="ECO:0007669"/>
    <property type="project" value="Ensembl"/>
</dbReference>
<dbReference type="GO" id="GO:0005743">
    <property type="term" value="C:mitochondrial inner membrane"/>
    <property type="evidence" value="ECO:0000250"/>
    <property type="project" value="UniProtKB"/>
</dbReference>
<dbReference type="GO" id="GO:0005739">
    <property type="term" value="C:mitochondrion"/>
    <property type="evidence" value="ECO:0000318"/>
    <property type="project" value="GO_Central"/>
</dbReference>
<dbReference type="GO" id="GO:0016607">
    <property type="term" value="C:nuclear speck"/>
    <property type="evidence" value="ECO:0007669"/>
    <property type="project" value="Ensembl"/>
</dbReference>
<dbReference type="GO" id="GO:0033615">
    <property type="term" value="P:mitochondrial proton-transporting ATP synthase complex assembly"/>
    <property type="evidence" value="ECO:0000250"/>
    <property type="project" value="UniProtKB"/>
</dbReference>
<dbReference type="FunFam" id="1.10.3580.10:FF:000001">
    <property type="entry name" value="ATP synthase mitochondrial F1 complex assembly factor 2"/>
    <property type="match status" value="1"/>
</dbReference>
<dbReference type="FunFam" id="3.30.2180.10:FF:000001">
    <property type="entry name" value="ATP synthase mitochondrial F1 complex assembly factor 2"/>
    <property type="match status" value="1"/>
</dbReference>
<dbReference type="Gene3D" id="1.10.3580.10">
    <property type="entry name" value="ATP12 ATPase"/>
    <property type="match status" value="1"/>
</dbReference>
<dbReference type="Gene3D" id="3.30.2180.10">
    <property type="entry name" value="ATP12-like"/>
    <property type="match status" value="1"/>
</dbReference>
<dbReference type="InterPro" id="IPR011419">
    <property type="entry name" value="ATP12_ATP_synth-F1-assembly"/>
</dbReference>
<dbReference type="InterPro" id="IPR042272">
    <property type="entry name" value="ATP12_ATP_synth-F1-assembly_N"/>
</dbReference>
<dbReference type="InterPro" id="IPR023335">
    <property type="entry name" value="ATP12_ortho_dom_sf"/>
</dbReference>
<dbReference type="PANTHER" id="PTHR21013:SF10">
    <property type="entry name" value="ATP SYNTHASE MITOCHONDRIAL F1 COMPLEX ASSEMBLY FACTOR 2"/>
    <property type="match status" value="1"/>
</dbReference>
<dbReference type="PANTHER" id="PTHR21013">
    <property type="entry name" value="ATP SYNTHASE MITOCHONDRIAL F1 COMPLEX ASSEMBLY FACTOR 2/ATP12 PROTEIN, MITOCHONDRIAL PRECURSOR"/>
    <property type="match status" value="1"/>
</dbReference>
<dbReference type="Pfam" id="PF07542">
    <property type="entry name" value="ATP12"/>
    <property type="match status" value="1"/>
</dbReference>
<dbReference type="SUPFAM" id="SSF160909">
    <property type="entry name" value="ATP12-like"/>
    <property type="match status" value="1"/>
</dbReference>
<gene>
    <name type="primary">ATPAF2</name>
</gene>
<protein>
    <recommendedName>
        <fullName evidence="1">ATP synthase mitochondrial F1 complex assembly factor 2</fullName>
    </recommendedName>
</protein>
<comment type="function">
    <text evidence="1">Plays a role in the assembly of the F1 component of the mitochondrial ATP synthase (ATPase).</text>
</comment>
<comment type="subunit">
    <text evidence="1">Interacts with ATP5F1B; involved in the assembly of the F1 component of the mitochondrial ATP synthase (ATPase). Interacts with FMC1.</text>
</comment>
<comment type="subcellular location">
    <subcellularLocation>
        <location evidence="1">Mitochondrion inner membrane</location>
        <topology evidence="1">Peripheral membrane protein</topology>
    </subcellularLocation>
</comment>
<comment type="similarity">
    <text evidence="4">Belongs to the ATP12 family.</text>
</comment>
<sequence>MWRRCLRLRDVGRRLLNLPRSGLTASEGLGPKLPTPIRAYVPPAERKRFYQNVSISQGEGGFEINLDHRKLRTPQGKLFTVPSEALAIAVATEWDSQQDTIKMYTMHLTTLCNTSLDNPTQRDKDQLIRAAVKFLDTDTVCYRVEEPETLVELQRNEWDPVISWAEKRYGVEIGSSTSITGPSIPARTREVLVSHLASYNMWALQGIEFVVTQLKSLVLTLGLTDLRLTVEQAVLLSRLEEEYQIQKWGNIEWAHDYELQELRARTAAGTLFVHLCSESTAVKHKLLQG</sequence>
<name>ATPF2_BOVIN</name>
<proteinExistence type="evidence at transcript level"/>
<feature type="transit peptide" description="Mitochondrion" evidence="3">
    <location>
        <begin position="1"/>
        <end position="40"/>
    </location>
</feature>
<feature type="chain" id="PRO_0000269562" description="ATP synthase mitochondrial F1 complex assembly factor 2">
    <location>
        <begin position="41"/>
        <end position="289"/>
    </location>
</feature>
<feature type="modified residue" description="N6-succinyllysine" evidence="2">
    <location>
        <position position="133"/>
    </location>
</feature>
<evidence type="ECO:0000250" key="1">
    <source>
        <dbReference type="UniProtKB" id="Q8N5M1"/>
    </source>
</evidence>
<evidence type="ECO:0000250" key="2">
    <source>
        <dbReference type="UniProtKB" id="Q91YY4"/>
    </source>
</evidence>
<evidence type="ECO:0000255" key="3"/>
<evidence type="ECO:0000305" key="4"/>